<sequence>MIVPIRCFTCGKPLGHLYITFKHRVLAGEHPGRVLDELGVHRYCCRRTLIAHVEWIDDLLVYEKRS</sequence>
<protein>
    <recommendedName>
        <fullName evidence="1">DNA-directed RNA polymerase subunit Rpo10</fullName>
        <ecNumber evidence="1">2.7.7.6</ecNumber>
    </recommendedName>
    <alternativeName>
        <fullName evidence="1">DNA-directed RNA polymerase subunit N</fullName>
    </alternativeName>
</protein>
<organism>
    <name type="scientific">Pyrobaculum islandicum (strain DSM 4184 / JCM 9189 / GEO3)</name>
    <dbReference type="NCBI Taxonomy" id="384616"/>
    <lineage>
        <taxon>Archaea</taxon>
        <taxon>Thermoproteota</taxon>
        <taxon>Thermoprotei</taxon>
        <taxon>Thermoproteales</taxon>
        <taxon>Thermoproteaceae</taxon>
        <taxon>Pyrobaculum</taxon>
    </lineage>
</organism>
<evidence type="ECO:0000255" key="1">
    <source>
        <dbReference type="HAMAP-Rule" id="MF_00250"/>
    </source>
</evidence>
<name>RPO10_PYRIL</name>
<reference key="1">
    <citation type="submission" date="2006-12" db="EMBL/GenBank/DDBJ databases">
        <title>Complete sequence of Pyrobaculum islandicum DSM 4184.</title>
        <authorList>
            <person name="Copeland A."/>
            <person name="Lucas S."/>
            <person name="Lapidus A."/>
            <person name="Barry K."/>
            <person name="Detter J.C."/>
            <person name="Glavina del Rio T."/>
            <person name="Dalin E."/>
            <person name="Tice H."/>
            <person name="Pitluck S."/>
            <person name="Meincke L."/>
            <person name="Brettin T."/>
            <person name="Bruce D."/>
            <person name="Han C."/>
            <person name="Tapia R."/>
            <person name="Gilna P."/>
            <person name="Schmutz J."/>
            <person name="Larimer F."/>
            <person name="Land M."/>
            <person name="Hauser L."/>
            <person name="Kyrpides N."/>
            <person name="Mikhailova N."/>
            <person name="Cozen A.E."/>
            <person name="Fitz-Gibbon S.T."/>
            <person name="House C.H."/>
            <person name="Saltikov C."/>
            <person name="Lowe T."/>
            <person name="Richardson P."/>
        </authorList>
    </citation>
    <scope>NUCLEOTIDE SEQUENCE [LARGE SCALE GENOMIC DNA]</scope>
    <source>
        <strain>DSM 4184 / JCM 9189 / GEO3</strain>
    </source>
</reference>
<proteinExistence type="inferred from homology"/>
<accession>A1RSD9</accession>
<keyword id="KW-0963">Cytoplasm</keyword>
<keyword id="KW-0240">DNA-directed RNA polymerase</keyword>
<keyword id="KW-0479">Metal-binding</keyword>
<keyword id="KW-0548">Nucleotidyltransferase</keyword>
<keyword id="KW-0804">Transcription</keyword>
<keyword id="KW-0808">Transferase</keyword>
<keyword id="KW-0862">Zinc</keyword>
<feature type="chain" id="PRO_0000304200" description="DNA-directed RNA polymerase subunit Rpo10">
    <location>
        <begin position="1"/>
        <end position="66"/>
    </location>
</feature>
<feature type="binding site" evidence="1">
    <location>
        <position position="7"/>
    </location>
    <ligand>
        <name>Zn(2+)</name>
        <dbReference type="ChEBI" id="CHEBI:29105"/>
    </ligand>
</feature>
<feature type="binding site" evidence="1">
    <location>
        <position position="10"/>
    </location>
    <ligand>
        <name>Zn(2+)</name>
        <dbReference type="ChEBI" id="CHEBI:29105"/>
    </ligand>
</feature>
<feature type="binding site" evidence="1">
    <location>
        <position position="44"/>
    </location>
    <ligand>
        <name>Zn(2+)</name>
        <dbReference type="ChEBI" id="CHEBI:29105"/>
    </ligand>
</feature>
<feature type="binding site" evidence="1">
    <location>
        <position position="45"/>
    </location>
    <ligand>
        <name>Zn(2+)</name>
        <dbReference type="ChEBI" id="CHEBI:29105"/>
    </ligand>
</feature>
<dbReference type="EC" id="2.7.7.6" evidence="1"/>
<dbReference type="EMBL" id="CP000504">
    <property type="protein sequence ID" value="ABL87871.1"/>
    <property type="molecule type" value="Genomic_DNA"/>
</dbReference>
<dbReference type="RefSeq" id="WP_011762447.1">
    <property type="nucleotide sequence ID" value="NC_008701.1"/>
</dbReference>
<dbReference type="SMR" id="A1RSD9"/>
<dbReference type="STRING" id="384616.Pisl_0693"/>
<dbReference type="GeneID" id="52278209"/>
<dbReference type="KEGG" id="pis:Pisl_0693"/>
<dbReference type="eggNOG" id="arCOG04244">
    <property type="taxonomic scope" value="Archaea"/>
</dbReference>
<dbReference type="HOGENOM" id="CLU_143122_1_1_2"/>
<dbReference type="OrthoDB" id="371754at2157"/>
<dbReference type="Proteomes" id="UP000002595">
    <property type="component" value="Chromosome"/>
</dbReference>
<dbReference type="GO" id="GO:0005737">
    <property type="term" value="C:cytoplasm"/>
    <property type="evidence" value="ECO:0007669"/>
    <property type="project" value="UniProtKB-SubCell"/>
</dbReference>
<dbReference type="GO" id="GO:0000428">
    <property type="term" value="C:DNA-directed RNA polymerase complex"/>
    <property type="evidence" value="ECO:0007669"/>
    <property type="project" value="UniProtKB-KW"/>
</dbReference>
<dbReference type="GO" id="GO:0003677">
    <property type="term" value="F:DNA binding"/>
    <property type="evidence" value="ECO:0007669"/>
    <property type="project" value="InterPro"/>
</dbReference>
<dbReference type="GO" id="GO:0003899">
    <property type="term" value="F:DNA-directed RNA polymerase activity"/>
    <property type="evidence" value="ECO:0007669"/>
    <property type="project" value="UniProtKB-UniRule"/>
</dbReference>
<dbReference type="GO" id="GO:0008270">
    <property type="term" value="F:zinc ion binding"/>
    <property type="evidence" value="ECO:0007669"/>
    <property type="project" value="UniProtKB-UniRule"/>
</dbReference>
<dbReference type="GO" id="GO:0006351">
    <property type="term" value="P:DNA-templated transcription"/>
    <property type="evidence" value="ECO:0007669"/>
    <property type="project" value="UniProtKB-UniRule"/>
</dbReference>
<dbReference type="FunFam" id="1.10.10.60:FF:000024">
    <property type="entry name" value="DNA-directed RNA polymerases I, II, and III subunit"/>
    <property type="match status" value="1"/>
</dbReference>
<dbReference type="Gene3D" id="1.10.10.60">
    <property type="entry name" value="Homeodomain-like"/>
    <property type="match status" value="1"/>
</dbReference>
<dbReference type="HAMAP" id="MF_00250">
    <property type="entry name" value="RNApol_arch_Rpo10"/>
    <property type="match status" value="1"/>
</dbReference>
<dbReference type="InterPro" id="IPR023580">
    <property type="entry name" value="RNA_pol_su_RPB10"/>
</dbReference>
<dbReference type="InterPro" id="IPR020789">
    <property type="entry name" value="RNA_pol_suN_Zn-BS"/>
</dbReference>
<dbReference type="InterPro" id="IPR000268">
    <property type="entry name" value="RPABC5/Rpb10"/>
</dbReference>
<dbReference type="NCBIfam" id="NF003089">
    <property type="entry name" value="PRK04016.1"/>
    <property type="match status" value="1"/>
</dbReference>
<dbReference type="PANTHER" id="PTHR23431:SF3">
    <property type="entry name" value="DNA-DIRECTED RNA POLYMERASES I, II, AND III SUBUNIT RPABC5"/>
    <property type="match status" value="1"/>
</dbReference>
<dbReference type="PANTHER" id="PTHR23431">
    <property type="entry name" value="DNA-DIRECTED RNA POLYMERASES I, II, AND III SUBUNIT RPABC5 FAMILY MEMBER"/>
    <property type="match status" value="1"/>
</dbReference>
<dbReference type="Pfam" id="PF01194">
    <property type="entry name" value="RNA_pol_N"/>
    <property type="match status" value="1"/>
</dbReference>
<dbReference type="PIRSF" id="PIRSF005653">
    <property type="entry name" value="RNA_pol_N/8_sub"/>
    <property type="match status" value="1"/>
</dbReference>
<dbReference type="SUPFAM" id="SSF46924">
    <property type="entry name" value="RNA polymerase subunit RPB10"/>
    <property type="match status" value="1"/>
</dbReference>
<dbReference type="PROSITE" id="PS01112">
    <property type="entry name" value="RNA_POL_N_8KD"/>
    <property type="match status" value="1"/>
</dbReference>
<gene>
    <name evidence="1" type="primary">rpo10</name>
    <name evidence="1" type="synonym">rpoN</name>
    <name type="ordered locus">Pisl_0693</name>
</gene>
<comment type="function">
    <text evidence="1">DNA-dependent RNA polymerase (RNAP) catalyzes the transcription of DNA into RNA using the four ribonucleoside triphosphates as substrates.</text>
</comment>
<comment type="catalytic activity">
    <reaction evidence="1">
        <text>RNA(n) + a ribonucleoside 5'-triphosphate = RNA(n+1) + diphosphate</text>
        <dbReference type="Rhea" id="RHEA:21248"/>
        <dbReference type="Rhea" id="RHEA-COMP:14527"/>
        <dbReference type="Rhea" id="RHEA-COMP:17342"/>
        <dbReference type="ChEBI" id="CHEBI:33019"/>
        <dbReference type="ChEBI" id="CHEBI:61557"/>
        <dbReference type="ChEBI" id="CHEBI:140395"/>
        <dbReference type="EC" id="2.7.7.6"/>
    </reaction>
</comment>
<comment type="cofactor">
    <cofactor evidence="1">
        <name>Zn(2+)</name>
        <dbReference type="ChEBI" id="CHEBI:29105"/>
    </cofactor>
    <text evidence="1">Binds 1 zinc ion.</text>
</comment>
<comment type="subunit">
    <text evidence="1">Part of the RNA polymerase complex.</text>
</comment>
<comment type="subcellular location">
    <subcellularLocation>
        <location evidence="1">Cytoplasm</location>
    </subcellularLocation>
</comment>
<comment type="similarity">
    <text evidence="1">Belongs to the archaeal Rpo10/eukaryotic RPB10 RNA polymerase subunit family.</text>
</comment>